<organism>
    <name type="scientific">Escherichia coli (strain SE11)</name>
    <dbReference type="NCBI Taxonomy" id="409438"/>
    <lineage>
        <taxon>Bacteria</taxon>
        <taxon>Pseudomonadati</taxon>
        <taxon>Pseudomonadota</taxon>
        <taxon>Gammaproteobacteria</taxon>
        <taxon>Enterobacterales</taxon>
        <taxon>Enterobacteriaceae</taxon>
        <taxon>Escherichia</taxon>
    </lineage>
</organism>
<sequence length="188" mass="20117">MNITATVLLAFGMSMDAFAASIGKGATLHKPKFSEALRTGLIFGAVETLTPLIGWGMGMLASRFVLEWNHWIAFVLLIFLGGRMIIEGFRGADDEDEEPRRRHGFWLLVTTAIATSLDAMAVGVGLAFLQVNIIATALAIGCATLIMSTLGMMVGRFIGSIIGKKAEILGGLVLIGIGVQILWTHFHG</sequence>
<evidence type="ECO:0000255" key="1">
    <source>
        <dbReference type="HAMAP-Rule" id="MF_01521"/>
    </source>
</evidence>
<accession>B6IBP8</accession>
<feature type="chain" id="PRO_1000200024" description="Probable manganese efflux pump MntP">
    <location>
        <begin position="1"/>
        <end position="188"/>
    </location>
</feature>
<feature type="transmembrane region" description="Helical" evidence="1">
    <location>
        <begin position="3"/>
        <end position="23"/>
    </location>
</feature>
<feature type="transmembrane region" description="Helical" evidence="1">
    <location>
        <begin position="66"/>
        <end position="86"/>
    </location>
</feature>
<feature type="transmembrane region" description="Helical" evidence="1">
    <location>
        <begin position="106"/>
        <end position="128"/>
    </location>
</feature>
<feature type="transmembrane region" description="Helical" evidence="1">
    <location>
        <begin position="143"/>
        <end position="163"/>
    </location>
</feature>
<feature type="transmembrane region" description="Helical" evidence="1">
    <location>
        <begin position="168"/>
        <end position="188"/>
    </location>
</feature>
<protein>
    <recommendedName>
        <fullName evidence="1">Probable manganese efflux pump MntP</fullName>
    </recommendedName>
</protein>
<dbReference type="EMBL" id="AP009240">
    <property type="protein sequence ID" value="BAG77519.1"/>
    <property type="molecule type" value="Genomic_DNA"/>
</dbReference>
<dbReference type="RefSeq" id="WP_001296134.1">
    <property type="nucleotide sequence ID" value="NC_011415.1"/>
</dbReference>
<dbReference type="GeneID" id="93776070"/>
<dbReference type="KEGG" id="ecy:ECSE_1995"/>
<dbReference type="HOGENOM" id="CLU_096410_0_0_6"/>
<dbReference type="Proteomes" id="UP000008199">
    <property type="component" value="Chromosome"/>
</dbReference>
<dbReference type="GO" id="GO:0005886">
    <property type="term" value="C:plasma membrane"/>
    <property type="evidence" value="ECO:0007669"/>
    <property type="project" value="UniProtKB-SubCell"/>
</dbReference>
<dbReference type="GO" id="GO:0005384">
    <property type="term" value="F:manganese ion transmembrane transporter activity"/>
    <property type="evidence" value="ECO:0007669"/>
    <property type="project" value="UniProtKB-UniRule"/>
</dbReference>
<dbReference type="HAMAP" id="MF_01521">
    <property type="entry name" value="MntP_pump"/>
    <property type="match status" value="1"/>
</dbReference>
<dbReference type="InterPro" id="IPR003810">
    <property type="entry name" value="Mntp/YtaF"/>
</dbReference>
<dbReference type="InterPro" id="IPR022929">
    <property type="entry name" value="Put_MntP"/>
</dbReference>
<dbReference type="NCBIfam" id="NF008546">
    <property type="entry name" value="PRK11469.1"/>
    <property type="match status" value="1"/>
</dbReference>
<dbReference type="PANTHER" id="PTHR35529">
    <property type="entry name" value="MANGANESE EFFLUX PUMP MNTP-RELATED"/>
    <property type="match status" value="1"/>
</dbReference>
<dbReference type="PANTHER" id="PTHR35529:SF1">
    <property type="entry name" value="MANGANESE EFFLUX PUMP MNTP-RELATED"/>
    <property type="match status" value="1"/>
</dbReference>
<dbReference type="Pfam" id="PF02659">
    <property type="entry name" value="Mntp"/>
    <property type="match status" value="1"/>
</dbReference>
<name>MNTP_ECOSE</name>
<gene>
    <name evidence="1" type="primary">mntP</name>
    <name type="synonym">yebN</name>
    <name type="ordered locus">ECSE_1995</name>
</gene>
<proteinExistence type="inferred from homology"/>
<reference key="1">
    <citation type="journal article" date="2008" name="DNA Res.">
        <title>Complete genome sequence and comparative analysis of the wild-type commensal Escherichia coli strain SE11 isolated from a healthy adult.</title>
        <authorList>
            <person name="Oshima K."/>
            <person name="Toh H."/>
            <person name="Ogura Y."/>
            <person name="Sasamoto H."/>
            <person name="Morita H."/>
            <person name="Park S.-H."/>
            <person name="Ooka T."/>
            <person name="Iyoda S."/>
            <person name="Taylor T.D."/>
            <person name="Hayashi T."/>
            <person name="Itoh K."/>
            <person name="Hattori M."/>
        </authorList>
    </citation>
    <scope>NUCLEOTIDE SEQUENCE [LARGE SCALE GENOMIC DNA]</scope>
    <source>
        <strain>SE11</strain>
    </source>
</reference>
<comment type="function">
    <text evidence="1">Probably functions as a manganese efflux pump.</text>
</comment>
<comment type="subcellular location">
    <subcellularLocation>
        <location evidence="1">Cell inner membrane</location>
        <topology evidence="1">Multi-pass membrane protein</topology>
    </subcellularLocation>
</comment>
<comment type="similarity">
    <text evidence="1">Belongs to the MntP (TC 9.B.29) family.</text>
</comment>
<keyword id="KW-0997">Cell inner membrane</keyword>
<keyword id="KW-1003">Cell membrane</keyword>
<keyword id="KW-0406">Ion transport</keyword>
<keyword id="KW-0464">Manganese</keyword>
<keyword id="KW-0472">Membrane</keyword>
<keyword id="KW-0812">Transmembrane</keyword>
<keyword id="KW-1133">Transmembrane helix</keyword>
<keyword id="KW-0813">Transport</keyword>